<comment type="function">
    <text evidence="1">Inulin-specific lectin. Has hemagglutinating activity towards rabbit erythrocytes. Has mitogenic activity towards murine splenocytes.</text>
</comment>
<comment type="subunit">
    <text evidence="1">Homodimer.</text>
</comment>
<evidence type="ECO:0000269" key="1">
    <source>
    </source>
</evidence>
<evidence type="ECO:0000303" key="2">
    <source>
    </source>
</evidence>
<evidence type="ECO:0000305" key="3"/>
<keyword id="KW-0903">Direct protein sequencing</keyword>
<keyword id="KW-0348">Hemagglutinin</keyword>
<keyword id="KW-0430">Lectin</keyword>
<keyword id="KW-0497">Mitogen</keyword>
<protein>
    <recommendedName>
        <fullName>Inulin-specific lectin</fullName>
    </recommendedName>
</protein>
<accession>P84526</accession>
<organism>
    <name type="scientific">Xerocomus spadiceus</name>
    <name type="common">Boletus spadiceus</name>
    <dbReference type="NCBI Taxonomy" id="279525"/>
    <lineage>
        <taxon>Eukaryota</taxon>
        <taxon>Fungi</taxon>
        <taxon>Dikarya</taxon>
        <taxon>Basidiomycota</taxon>
        <taxon>Agaricomycotina</taxon>
        <taxon>Agaricomycetes</taxon>
        <taxon>Agaricomycetidae</taxon>
        <taxon>Boletales</taxon>
        <taxon>Boletineae</taxon>
        <taxon>Boletaceae</taxon>
        <taxon>Xerocomoideae</taxon>
        <taxon>Xerocomus</taxon>
    </lineage>
</organism>
<proteinExistence type="evidence at protein level"/>
<sequence length="13" mass="1210">CSKGGVGRGYGIG</sequence>
<name>ILEC1_XERSP</name>
<feature type="chain" id="PRO_0000084180" description="Inulin-specific lectin">
    <location>
        <begin position="1"/>
        <end position="13" status="greater than"/>
    </location>
</feature>
<feature type="non-terminal residue" evidence="2">
    <location>
        <position position="13"/>
    </location>
</feature>
<dbReference type="GO" id="GO:0030246">
    <property type="term" value="F:carbohydrate binding"/>
    <property type="evidence" value="ECO:0007669"/>
    <property type="project" value="UniProtKB-KW"/>
</dbReference>
<dbReference type="GO" id="GO:0051781">
    <property type="term" value="P:positive regulation of cell division"/>
    <property type="evidence" value="ECO:0007669"/>
    <property type="project" value="UniProtKB-KW"/>
</dbReference>
<reference evidence="3" key="1">
    <citation type="journal article" date="2004" name="Peptides">
        <title>Isolation and characterization of a novel lectin from the wild mushroom Xerocomus spadiceus.</title>
        <authorList>
            <person name="Liu Q."/>
            <person name="Wang H."/>
            <person name="Ng T.B."/>
        </authorList>
    </citation>
    <scope>PROTEIN SEQUENCE</scope>
    <scope>FUNCTION</scope>
    <scope>SUBUNIT</scope>
    <source>
        <tissue evidence="1">Fruiting body</tissue>
    </source>
</reference>